<accession>Q9FM55</accession>
<sequence>MDKISGFSDDELLVKILSFLPFKFAITTSVLSKQWKFLWMRVPKLEYDEDSMYSFEYSFRYFLPKAKEVDSETYSIVSESGHRMRSFIEKNLPLHSSPVIESLRLKFFTEVFQPEDIKLWVEIAVSRCAQELSVDFFPKEKHNALLPRNLYTCKSLVTLKLRNNILVDVPHVFSLPSLKILHLERVTYGDGESLQRLLSNCSVLEDLVVELDTGDNVRKLDVIIPSLLSLSFGMSRYCAYEGYRIDTPSLKYFKLTDLSKTFSGLIENMPKLEEANITARHNFKKLLELVTSVKRLSLNIENNDAEALTAIYGDDIVFNELEHLNFHIHNAYWSELLYWLLKASPKLQNLEFDEQCSRDGTMGTLAVFWNQPNSVPQCLLSTLQTFEWSGYPGSVQGKDLATYILRKSRQLKIATISIGYGLDPQQKLKMEMDVKFSFRASPTCKRVFY</sequence>
<proteinExistence type="predicted"/>
<reference key="1">
    <citation type="journal article" date="1998" name="DNA Res.">
        <title>Structural analysis of Arabidopsis thaliana chromosome 5. IV. Sequence features of the regions of 1,456,315 bp covered by nineteen physically assigned P1 and TAC clones.</title>
        <authorList>
            <person name="Sato S."/>
            <person name="Kaneko T."/>
            <person name="Kotani H."/>
            <person name="Nakamura Y."/>
            <person name="Asamizu E."/>
            <person name="Miyajima N."/>
            <person name="Tabata S."/>
        </authorList>
    </citation>
    <scope>NUCLEOTIDE SEQUENCE [LARGE SCALE GENOMIC DNA]</scope>
    <source>
        <strain>cv. Columbia</strain>
    </source>
</reference>
<reference key="2">
    <citation type="journal article" date="2017" name="Plant J.">
        <title>Araport11: a complete reannotation of the Arabidopsis thaliana reference genome.</title>
        <authorList>
            <person name="Cheng C.Y."/>
            <person name="Krishnakumar V."/>
            <person name="Chan A.P."/>
            <person name="Thibaud-Nissen F."/>
            <person name="Schobel S."/>
            <person name="Town C.D."/>
        </authorList>
    </citation>
    <scope>GENOME REANNOTATION</scope>
    <source>
        <strain>cv. Columbia</strain>
    </source>
</reference>
<dbReference type="EMBL" id="AB009051">
    <property type="protein sequence ID" value="BAB08840.1"/>
    <property type="molecule type" value="Genomic_DNA"/>
</dbReference>
<dbReference type="EMBL" id="CP002688">
    <property type="protein sequence ID" value="AED97681.1"/>
    <property type="molecule type" value="Genomic_DNA"/>
</dbReference>
<dbReference type="RefSeq" id="NP_201102.1">
    <property type="nucleotide sequence ID" value="NM_125691.1"/>
</dbReference>
<dbReference type="STRING" id="3702.Q9FM55"/>
<dbReference type="PaxDb" id="3702-AT5G62970.1"/>
<dbReference type="DNASU" id="836417"/>
<dbReference type="EnsemblPlants" id="AT5G62970.1">
    <property type="protein sequence ID" value="AT5G62970.1"/>
    <property type="gene ID" value="AT5G62970"/>
</dbReference>
<dbReference type="GeneID" id="836417"/>
<dbReference type="Gramene" id="AT5G62970.1">
    <property type="protein sequence ID" value="AT5G62970.1"/>
    <property type="gene ID" value="AT5G62970"/>
</dbReference>
<dbReference type="KEGG" id="ath:AT5G62970"/>
<dbReference type="Araport" id="AT5G62970"/>
<dbReference type="TAIR" id="AT5G62970"/>
<dbReference type="HOGENOM" id="CLU_010721_1_2_1"/>
<dbReference type="InParanoid" id="Q9FM55"/>
<dbReference type="OMA" id="MICTCET"/>
<dbReference type="PhylomeDB" id="Q9FM55"/>
<dbReference type="PRO" id="PR:Q9FM55"/>
<dbReference type="Proteomes" id="UP000006548">
    <property type="component" value="Chromosome 5"/>
</dbReference>
<dbReference type="ExpressionAtlas" id="Q9FM55">
    <property type="expression patterns" value="baseline and differential"/>
</dbReference>
<dbReference type="CDD" id="cd22160">
    <property type="entry name" value="F-box_AtFBL13-like"/>
    <property type="match status" value="1"/>
</dbReference>
<dbReference type="Gene3D" id="3.80.10.10">
    <property type="entry name" value="Ribonuclease Inhibitor"/>
    <property type="match status" value="1"/>
</dbReference>
<dbReference type="InterPro" id="IPR036047">
    <property type="entry name" value="F-box-like_dom_sf"/>
</dbReference>
<dbReference type="InterPro" id="IPR053781">
    <property type="entry name" value="F-box_AtFBL13-like"/>
</dbReference>
<dbReference type="InterPro" id="IPR001810">
    <property type="entry name" value="F-box_dom"/>
</dbReference>
<dbReference type="InterPro" id="IPR006566">
    <property type="entry name" value="FBD"/>
</dbReference>
<dbReference type="InterPro" id="IPR050232">
    <property type="entry name" value="FBL13/AtMIF1-like"/>
</dbReference>
<dbReference type="InterPro" id="IPR032675">
    <property type="entry name" value="LRR_dom_sf"/>
</dbReference>
<dbReference type="InterPro" id="IPR055411">
    <property type="entry name" value="LRR_FXL15/At3g58940/PEG3-like"/>
</dbReference>
<dbReference type="PANTHER" id="PTHR31900">
    <property type="entry name" value="F-BOX/RNI SUPERFAMILY PROTEIN-RELATED"/>
    <property type="match status" value="1"/>
</dbReference>
<dbReference type="PANTHER" id="PTHR31900:SF28">
    <property type="entry name" value="FBD DOMAIN-CONTAINING PROTEIN"/>
    <property type="match status" value="1"/>
</dbReference>
<dbReference type="Pfam" id="PF00646">
    <property type="entry name" value="F-box"/>
    <property type="match status" value="1"/>
</dbReference>
<dbReference type="Pfam" id="PF08387">
    <property type="entry name" value="FBD"/>
    <property type="match status" value="1"/>
</dbReference>
<dbReference type="Pfam" id="PF24758">
    <property type="entry name" value="LRR_At5g56370"/>
    <property type="match status" value="1"/>
</dbReference>
<dbReference type="SMART" id="SM00579">
    <property type="entry name" value="FBD"/>
    <property type="match status" value="1"/>
</dbReference>
<dbReference type="SUPFAM" id="SSF81383">
    <property type="entry name" value="F-box domain"/>
    <property type="match status" value="1"/>
</dbReference>
<dbReference type="SUPFAM" id="SSF52047">
    <property type="entry name" value="RNI-like"/>
    <property type="match status" value="1"/>
</dbReference>
<gene>
    <name type="ordered locus">At5g62970</name>
    <name type="ORF">MJH22.2</name>
</gene>
<name>FDL41_ARATH</name>
<feature type="chain" id="PRO_0000283133" description="Putative F-box/FBD/LRR-repeat protein At5g62970">
    <location>
        <begin position="1"/>
        <end position="449"/>
    </location>
</feature>
<feature type="domain" description="F-box">
    <location>
        <begin position="2"/>
        <end position="50"/>
    </location>
</feature>
<feature type="repeat" description="LRR 1">
    <location>
        <begin position="27"/>
        <end position="52"/>
    </location>
</feature>
<feature type="repeat" description="LRR 2">
    <location>
        <begin position="81"/>
        <end position="107"/>
    </location>
</feature>
<feature type="repeat" description="LRR 3">
    <location>
        <begin position="158"/>
        <end position="185"/>
    </location>
</feature>
<feature type="repeat" description="LRR 4">
    <location>
        <begin position="186"/>
        <end position="211"/>
    </location>
</feature>
<feature type="repeat" description="LRR 5">
    <location>
        <begin position="252"/>
        <end position="279"/>
    </location>
</feature>
<feature type="repeat" description="LRR 6">
    <location>
        <begin position="328"/>
        <end position="354"/>
    </location>
</feature>
<feature type="domain" description="FBD">
    <location>
        <begin position="368"/>
        <end position="418"/>
    </location>
</feature>
<keyword id="KW-0433">Leucine-rich repeat</keyword>
<keyword id="KW-1185">Reference proteome</keyword>
<keyword id="KW-0677">Repeat</keyword>
<protein>
    <recommendedName>
        <fullName>Putative F-box/FBD/LRR-repeat protein At5g62970</fullName>
    </recommendedName>
</protein>
<organism>
    <name type="scientific">Arabidopsis thaliana</name>
    <name type="common">Mouse-ear cress</name>
    <dbReference type="NCBI Taxonomy" id="3702"/>
    <lineage>
        <taxon>Eukaryota</taxon>
        <taxon>Viridiplantae</taxon>
        <taxon>Streptophyta</taxon>
        <taxon>Embryophyta</taxon>
        <taxon>Tracheophyta</taxon>
        <taxon>Spermatophyta</taxon>
        <taxon>Magnoliopsida</taxon>
        <taxon>eudicotyledons</taxon>
        <taxon>Gunneridae</taxon>
        <taxon>Pentapetalae</taxon>
        <taxon>rosids</taxon>
        <taxon>malvids</taxon>
        <taxon>Brassicales</taxon>
        <taxon>Brassicaceae</taxon>
        <taxon>Camelineae</taxon>
        <taxon>Arabidopsis</taxon>
    </lineage>
</organism>